<name>TTR5_CAEEL</name>
<sequence length="139" mass="14995">MKLIILLCLVASSYALIGNTQSAGVRGKLICNGKPAVGVLVKLYDDDRGIDADDLMASGKTNGNGDFEISGHEDEVTPIDPKLNIYHDCNDGIKPCQRKFTIKIPDSYINKGKTVRNIYDAGVIQLAGSFPGEGRDCLH</sequence>
<protein>
    <recommendedName>
        <fullName>Transthyretin-like protein 5</fullName>
    </recommendedName>
</protein>
<comment type="subcellular location">
    <subcellularLocation>
        <location evidence="2">Secreted</location>
    </subcellularLocation>
</comment>
<comment type="similarity">
    <text evidence="2">Belongs to the nematode transthyretin-like family.</text>
</comment>
<proteinExistence type="inferred from homology"/>
<gene>
    <name type="primary">ttr-5</name>
    <name type="ORF">C40H1.5</name>
</gene>
<organism>
    <name type="scientific">Caenorhabditis elegans</name>
    <dbReference type="NCBI Taxonomy" id="6239"/>
    <lineage>
        <taxon>Eukaryota</taxon>
        <taxon>Metazoa</taxon>
        <taxon>Ecdysozoa</taxon>
        <taxon>Nematoda</taxon>
        <taxon>Chromadorea</taxon>
        <taxon>Rhabditida</taxon>
        <taxon>Rhabditina</taxon>
        <taxon>Rhabditomorpha</taxon>
        <taxon>Rhabditoidea</taxon>
        <taxon>Rhabditidae</taxon>
        <taxon>Peloderinae</taxon>
        <taxon>Caenorhabditis</taxon>
    </lineage>
</organism>
<keyword id="KW-1185">Reference proteome</keyword>
<keyword id="KW-0964">Secreted</keyword>
<keyword id="KW-0732">Signal</keyword>
<dbReference type="EMBL" id="Z19154">
    <property type="protein sequence ID" value="CAA79556.1"/>
    <property type="molecule type" value="Genomic_DNA"/>
</dbReference>
<dbReference type="PIR" id="S28300">
    <property type="entry name" value="S28300"/>
</dbReference>
<dbReference type="RefSeq" id="NP_499054.1">
    <property type="nucleotide sequence ID" value="NM_066653.4"/>
</dbReference>
<dbReference type="SMR" id="Q03575"/>
<dbReference type="BioGRID" id="41510">
    <property type="interactions" value="14"/>
</dbReference>
<dbReference type="FunCoup" id="Q03575">
    <property type="interactions" value="126"/>
</dbReference>
<dbReference type="IntAct" id="Q03575">
    <property type="interactions" value="1"/>
</dbReference>
<dbReference type="STRING" id="6239.C40H1.5.1"/>
<dbReference type="PaxDb" id="6239-C40H1.5"/>
<dbReference type="PeptideAtlas" id="Q03575"/>
<dbReference type="EnsemblMetazoa" id="C40H1.5.1">
    <property type="protein sequence ID" value="C40H1.5.1"/>
    <property type="gene ID" value="WBGene00008040"/>
</dbReference>
<dbReference type="GeneID" id="176312"/>
<dbReference type="KEGG" id="cel:CELE_C40H1.5"/>
<dbReference type="AGR" id="WB:WBGene00008040"/>
<dbReference type="CTD" id="176312"/>
<dbReference type="WormBase" id="C40H1.5">
    <property type="protein sequence ID" value="CE00113"/>
    <property type="gene ID" value="WBGene00008040"/>
    <property type="gene designation" value="ttr-5"/>
</dbReference>
<dbReference type="eggNOG" id="ENOG502S1IK">
    <property type="taxonomic scope" value="Eukaryota"/>
</dbReference>
<dbReference type="GeneTree" id="ENSGT00970000196084"/>
<dbReference type="HOGENOM" id="CLU_121109_4_1_1"/>
<dbReference type="InParanoid" id="Q03575"/>
<dbReference type="OMA" id="CNGQPAV"/>
<dbReference type="OrthoDB" id="5849824at2759"/>
<dbReference type="PhylomeDB" id="Q03575"/>
<dbReference type="SignaLink" id="Q03575"/>
<dbReference type="PRO" id="PR:Q03575"/>
<dbReference type="Proteomes" id="UP000001940">
    <property type="component" value="Chromosome III"/>
</dbReference>
<dbReference type="Bgee" id="WBGene00008040">
    <property type="expression patterns" value="Expressed in larva and 4 other cell types or tissues"/>
</dbReference>
<dbReference type="GO" id="GO:0009986">
    <property type="term" value="C:cell surface"/>
    <property type="evidence" value="ECO:0007669"/>
    <property type="project" value="InterPro"/>
</dbReference>
<dbReference type="GO" id="GO:0005576">
    <property type="term" value="C:extracellular region"/>
    <property type="evidence" value="ECO:0007669"/>
    <property type="project" value="UniProtKB-SubCell"/>
</dbReference>
<dbReference type="Gene3D" id="2.60.40.3330">
    <property type="match status" value="1"/>
</dbReference>
<dbReference type="InterPro" id="IPR001534">
    <property type="entry name" value="Transthyretin-like"/>
</dbReference>
<dbReference type="InterPro" id="IPR038479">
    <property type="entry name" value="Transthyretin-like_sf"/>
</dbReference>
<dbReference type="PANTHER" id="PTHR21700">
    <property type="entry name" value="TRANSTHYRETIN-LIKE FAMILY PROTEIN-RELATED"/>
    <property type="match status" value="1"/>
</dbReference>
<dbReference type="PANTHER" id="PTHR21700:SF3">
    <property type="entry name" value="TRANSTHYRETIN-LIKE PROTEIN 5"/>
    <property type="match status" value="1"/>
</dbReference>
<dbReference type="Pfam" id="PF01060">
    <property type="entry name" value="TTR-52"/>
    <property type="match status" value="1"/>
</dbReference>
<reference key="1">
    <citation type="journal article" date="1994" name="Nature">
        <title>2.2 Mb of contiguous nucleotide sequence from chromosome III of C. elegans.</title>
        <authorList>
            <person name="Wilson R."/>
            <person name="Ainscough R."/>
            <person name="Anderson K."/>
            <person name="Baynes C."/>
            <person name="Berks M."/>
            <person name="Bonfield J."/>
            <person name="Burton J."/>
            <person name="Connell M."/>
            <person name="Copsey T."/>
            <person name="Cooper J."/>
            <person name="Coulson A."/>
            <person name="Craxton M."/>
            <person name="Dear S."/>
            <person name="Du Z."/>
            <person name="Durbin R."/>
            <person name="Favello A."/>
            <person name="Fraser A."/>
            <person name="Fulton L."/>
            <person name="Gardner A."/>
            <person name="Green P."/>
            <person name="Hawkins T."/>
            <person name="Hillier L."/>
            <person name="Jier M."/>
            <person name="Johnston L."/>
            <person name="Jones M."/>
            <person name="Kershaw J."/>
            <person name="Kirsten J."/>
            <person name="Laisster N."/>
            <person name="Latreille P."/>
            <person name="Lightning J."/>
            <person name="Lloyd C."/>
            <person name="Mortimore B."/>
            <person name="O'Callaghan M."/>
            <person name="Parsons J."/>
            <person name="Percy C."/>
            <person name="Rifken L."/>
            <person name="Roopra A."/>
            <person name="Saunders D."/>
            <person name="Shownkeen R."/>
            <person name="Sims M."/>
            <person name="Smaldon N."/>
            <person name="Smith A."/>
            <person name="Smith M."/>
            <person name="Sonnhammer E."/>
            <person name="Staden R."/>
            <person name="Sulston J."/>
            <person name="Thierry-Mieg J."/>
            <person name="Thomas K."/>
            <person name="Vaudin M."/>
            <person name="Vaughan K."/>
            <person name="Waterston R."/>
            <person name="Watson A."/>
            <person name="Weinstock L."/>
            <person name="Wilkinson-Sproat J."/>
            <person name="Wohldman P."/>
        </authorList>
    </citation>
    <scope>NUCLEOTIDE SEQUENCE [LARGE SCALE GENOMIC DNA]</scope>
    <source>
        <strain>Bristol N2</strain>
    </source>
</reference>
<reference key="2">
    <citation type="journal article" date="1998" name="Science">
        <title>Genome sequence of the nematode C. elegans: a platform for investigating biology.</title>
        <authorList>
            <consortium name="The C. elegans sequencing consortium"/>
        </authorList>
    </citation>
    <scope>NUCLEOTIDE SEQUENCE [LARGE SCALE GENOMIC DNA]</scope>
    <source>
        <strain>Bristol N2</strain>
    </source>
</reference>
<evidence type="ECO:0000255" key="1"/>
<evidence type="ECO:0000305" key="2"/>
<feature type="signal peptide" evidence="1">
    <location>
        <begin position="1"/>
        <end position="15"/>
    </location>
</feature>
<feature type="chain" id="PRO_0000036250" description="Transthyretin-like protein 5">
    <location>
        <begin position="16"/>
        <end position="139"/>
    </location>
</feature>
<accession>Q03575</accession>